<accession>Q5U3W0</accession>
<reference key="1">
    <citation type="submission" date="2004-11" db="EMBL/GenBank/DDBJ databases">
        <authorList>
            <consortium name="NIH - Zebrafish Gene Collection (ZGC) project"/>
        </authorList>
    </citation>
    <scope>NUCLEOTIDE SEQUENCE [LARGE SCALE MRNA]</scope>
    <source>
        <tissue>Embryo</tissue>
    </source>
</reference>
<proteinExistence type="evidence at transcript level"/>
<evidence type="ECO:0000250" key="1"/>
<evidence type="ECO:0000305" key="2"/>
<gene>
    <name type="primary">cpped1</name>
    <name type="synonym">cstp1</name>
    <name type="ORF">zgc:101576</name>
</gene>
<protein>
    <recommendedName>
        <fullName>Serine/threonine-protein phosphatase CPPED1</fullName>
        <ecNumber>3.1.3.16</ecNumber>
    </recommendedName>
    <alternativeName>
        <fullName>Calcineurin-like phosphoesterase domain-containing protein 1</fullName>
    </alternativeName>
</protein>
<feature type="chain" id="PRO_0000320560" description="Serine/threonine-protein phosphatase CPPED1">
    <location>
        <begin position="1"/>
        <end position="309"/>
    </location>
</feature>
<feature type="region of interest" description="Catalytic" evidence="1">
    <location>
        <begin position="47"/>
        <end position="250"/>
    </location>
</feature>
<feature type="binding site" evidence="1">
    <location>
        <position position="51"/>
    </location>
    <ligand>
        <name>a divalent metal cation</name>
        <dbReference type="ChEBI" id="CHEBI:60240"/>
        <label>1</label>
    </ligand>
</feature>
<feature type="binding site" evidence="1">
    <location>
        <position position="88"/>
    </location>
    <ligand>
        <name>a divalent metal cation</name>
        <dbReference type="ChEBI" id="CHEBI:60240"/>
        <label>1</label>
    </ligand>
</feature>
<feature type="binding site" evidence="1">
    <location>
        <position position="88"/>
    </location>
    <ligand>
        <name>a divalent metal cation</name>
        <dbReference type="ChEBI" id="CHEBI:60240"/>
        <label>2</label>
    </ligand>
</feature>
<feature type="binding site" evidence="1">
    <location>
        <position position="125"/>
    </location>
    <ligand>
        <name>a divalent metal cation</name>
        <dbReference type="ChEBI" id="CHEBI:60240"/>
        <label>2</label>
    </ligand>
</feature>
<feature type="binding site" evidence="1">
    <location>
        <position position="244"/>
    </location>
    <ligand>
        <name>a divalent metal cation</name>
        <dbReference type="ChEBI" id="CHEBI:60240"/>
        <label>2</label>
    </ligand>
</feature>
<name>CPPED_DANRE</name>
<keyword id="KW-0963">Cytoplasm</keyword>
<keyword id="KW-0378">Hydrolase</keyword>
<keyword id="KW-0479">Metal-binding</keyword>
<keyword id="KW-1185">Reference proteome</keyword>
<organism>
    <name type="scientific">Danio rerio</name>
    <name type="common">Zebrafish</name>
    <name type="synonym">Brachydanio rerio</name>
    <dbReference type="NCBI Taxonomy" id="7955"/>
    <lineage>
        <taxon>Eukaryota</taxon>
        <taxon>Metazoa</taxon>
        <taxon>Chordata</taxon>
        <taxon>Craniata</taxon>
        <taxon>Vertebrata</taxon>
        <taxon>Euteleostomi</taxon>
        <taxon>Actinopterygii</taxon>
        <taxon>Neopterygii</taxon>
        <taxon>Teleostei</taxon>
        <taxon>Ostariophysi</taxon>
        <taxon>Cypriniformes</taxon>
        <taxon>Danionidae</taxon>
        <taxon>Danioninae</taxon>
        <taxon>Danio</taxon>
    </lineage>
</organism>
<sequence length="309" mass="35050">MAADESVFLRAKDRSYKGLTEDEQKEWSGPFYFIQAADPQLGLMKAWRIGDCDSGGDEWDEEVQLTKQAVQAINKLQPKPRFIVLCGDLVHAMPGSPFREQQIKDLKDALRGTDPHIPLVFVSGNHDLGNAPTPDTVEQFCHEWGDDYFSFWVGGVLCLVLNSQFFFDSSGCPELMEAHEVWLENRLQMAVQTPSRHVLVFQHIPLFLRTPDEEDDYFNLQRGIREHLIQRFKRAGVKAVFSGHYHRNAGGCHDGLDMVVSSAVGCQLGDDTHGVRVVVVTENNIIHRYHSLDQLSERGMDEDLKKLLL</sequence>
<comment type="function">
    <text evidence="1">Protein phosphatase involved in the dephosphorylation of AKT kinase family.</text>
</comment>
<comment type="catalytic activity">
    <reaction>
        <text>O-phospho-L-seryl-[protein] + H2O = L-seryl-[protein] + phosphate</text>
        <dbReference type="Rhea" id="RHEA:20629"/>
        <dbReference type="Rhea" id="RHEA-COMP:9863"/>
        <dbReference type="Rhea" id="RHEA-COMP:11604"/>
        <dbReference type="ChEBI" id="CHEBI:15377"/>
        <dbReference type="ChEBI" id="CHEBI:29999"/>
        <dbReference type="ChEBI" id="CHEBI:43474"/>
        <dbReference type="ChEBI" id="CHEBI:83421"/>
        <dbReference type="EC" id="3.1.3.16"/>
    </reaction>
</comment>
<comment type="catalytic activity">
    <reaction>
        <text>O-phospho-L-threonyl-[protein] + H2O = L-threonyl-[protein] + phosphate</text>
        <dbReference type="Rhea" id="RHEA:47004"/>
        <dbReference type="Rhea" id="RHEA-COMP:11060"/>
        <dbReference type="Rhea" id="RHEA-COMP:11605"/>
        <dbReference type="ChEBI" id="CHEBI:15377"/>
        <dbReference type="ChEBI" id="CHEBI:30013"/>
        <dbReference type="ChEBI" id="CHEBI:43474"/>
        <dbReference type="ChEBI" id="CHEBI:61977"/>
        <dbReference type="EC" id="3.1.3.16"/>
    </reaction>
</comment>
<comment type="cofactor">
    <cofactor evidence="1">
        <name>a divalent metal cation</name>
        <dbReference type="ChEBI" id="CHEBI:60240"/>
    </cofactor>
    <text evidence="1">Binds 2 divalent metal cations.</text>
</comment>
<comment type="subcellular location">
    <subcellularLocation>
        <location evidence="1">Cytoplasm</location>
    </subcellularLocation>
</comment>
<comment type="similarity">
    <text evidence="2">Belongs to the metallophosphoesterase superfamily. CPPED1 family.</text>
</comment>
<dbReference type="EC" id="3.1.3.16"/>
<dbReference type="EMBL" id="BC085372">
    <property type="protein sequence ID" value="AAH85372.1"/>
    <property type="molecule type" value="mRNA"/>
</dbReference>
<dbReference type="RefSeq" id="NP_001007414.1">
    <property type="nucleotide sequence ID" value="NM_001007413.1"/>
</dbReference>
<dbReference type="SMR" id="Q5U3W0"/>
<dbReference type="FunCoup" id="Q5U3W0">
    <property type="interactions" value="31"/>
</dbReference>
<dbReference type="STRING" id="7955.ENSDARP00000045608"/>
<dbReference type="PaxDb" id="7955-ENSDARP00000045608"/>
<dbReference type="GeneID" id="492772"/>
<dbReference type="KEGG" id="dre:492772"/>
<dbReference type="AGR" id="ZFIN:ZDB-GENE-041114-118"/>
<dbReference type="CTD" id="55313"/>
<dbReference type="ZFIN" id="ZDB-GENE-041114-118">
    <property type="gene designation" value="cpped1"/>
</dbReference>
<dbReference type="eggNOG" id="KOG1378">
    <property type="taxonomic scope" value="Eukaryota"/>
</dbReference>
<dbReference type="InParanoid" id="Q5U3W0"/>
<dbReference type="OrthoDB" id="45007at2759"/>
<dbReference type="PhylomeDB" id="Q5U3W0"/>
<dbReference type="Reactome" id="R-DRE-6798695">
    <property type="pathway name" value="Neutrophil degranulation"/>
</dbReference>
<dbReference type="PRO" id="PR:Q5U3W0"/>
<dbReference type="Proteomes" id="UP000000437">
    <property type="component" value="Alternate scaffold 12"/>
</dbReference>
<dbReference type="Proteomes" id="UP000000437">
    <property type="component" value="Chromosome 12"/>
</dbReference>
<dbReference type="GO" id="GO:0005737">
    <property type="term" value="C:cytoplasm"/>
    <property type="evidence" value="ECO:0007669"/>
    <property type="project" value="UniProtKB-SubCell"/>
</dbReference>
<dbReference type="GO" id="GO:0046872">
    <property type="term" value="F:metal ion binding"/>
    <property type="evidence" value="ECO:0007669"/>
    <property type="project" value="UniProtKB-KW"/>
</dbReference>
<dbReference type="GO" id="GO:0004722">
    <property type="term" value="F:protein serine/threonine phosphatase activity"/>
    <property type="evidence" value="ECO:0007669"/>
    <property type="project" value="UniProtKB-EC"/>
</dbReference>
<dbReference type="CDD" id="cd07395">
    <property type="entry name" value="MPP_CSTP1"/>
    <property type="match status" value="1"/>
</dbReference>
<dbReference type="Gene3D" id="3.60.21.10">
    <property type="match status" value="1"/>
</dbReference>
<dbReference type="InterPro" id="IPR004843">
    <property type="entry name" value="Calcineurin-like_PHP_ApaH"/>
</dbReference>
<dbReference type="InterPro" id="IPR029052">
    <property type="entry name" value="Metallo-depent_PP-like"/>
</dbReference>
<dbReference type="InterPro" id="IPR041867">
    <property type="entry name" value="MPP_CSTP1"/>
</dbReference>
<dbReference type="InterPro" id="IPR051918">
    <property type="entry name" value="STPP_CPPED1"/>
</dbReference>
<dbReference type="PANTHER" id="PTHR43143">
    <property type="entry name" value="METALLOPHOSPHOESTERASE, CALCINEURIN SUPERFAMILY"/>
    <property type="match status" value="1"/>
</dbReference>
<dbReference type="PANTHER" id="PTHR43143:SF1">
    <property type="entry name" value="SERINE_THREONINE-PROTEIN PHOSPHATASE CPPED1"/>
    <property type="match status" value="1"/>
</dbReference>
<dbReference type="Pfam" id="PF00149">
    <property type="entry name" value="Metallophos"/>
    <property type="match status" value="1"/>
</dbReference>
<dbReference type="SUPFAM" id="SSF56300">
    <property type="entry name" value="Metallo-dependent phosphatases"/>
    <property type="match status" value="1"/>
</dbReference>